<gene>
    <name evidence="8" type="primary">hisM</name>
    <name type="ordered locus">STM2352</name>
</gene>
<feature type="chain" id="PRO_0000060048" description="Histidine/lysine/arginine/ornithine transport system permease protein HisM">
    <location>
        <begin position="1"/>
        <end position="235"/>
    </location>
</feature>
<feature type="topological domain" description="Periplasmic" evidence="3">
    <location>
        <begin position="1"/>
        <end position="26"/>
    </location>
</feature>
<feature type="transmembrane region" description="Helical" evidence="1">
    <location>
        <begin position="27"/>
        <end position="47"/>
    </location>
</feature>
<feature type="topological domain" description="Cytoplasmic" evidence="3">
    <location>
        <begin position="48"/>
        <end position="58"/>
    </location>
</feature>
<feature type="transmembrane region" description="Helical" evidence="1">
    <location>
        <begin position="59"/>
        <end position="79"/>
    </location>
</feature>
<feature type="topological domain" description="Periplasmic" evidence="3">
    <location>
        <begin position="80"/>
        <end position="104"/>
    </location>
</feature>
<feature type="transmembrane region" description="Helical" evidence="1">
    <location>
        <begin position="105"/>
        <end position="125"/>
    </location>
</feature>
<feature type="topological domain" description="Cytoplasmic" evidence="3">
    <location>
        <begin position="126"/>
        <end position="157"/>
    </location>
</feature>
<feature type="transmembrane region" description="Helical" evidence="1">
    <location>
        <begin position="158"/>
        <end position="178"/>
    </location>
</feature>
<feature type="topological domain" description="Periplasmic" evidence="3">
    <location>
        <begin position="179"/>
        <end position="199"/>
    </location>
</feature>
<feature type="transmembrane region" description="Helical" evidence="1">
    <location>
        <begin position="200"/>
        <end position="220"/>
    </location>
</feature>
<feature type="topological domain" description="Cytoplasmic" evidence="3">
    <location>
        <begin position="221"/>
        <end position="235"/>
    </location>
</feature>
<feature type="domain" description="ABC transmembrane type-1" evidence="2">
    <location>
        <begin position="23"/>
        <end position="221"/>
    </location>
</feature>
<reference key="1">
    <citation type="journal article" date="1982" name="Nature">
        <title>Complete nucleotide sequence and identification of membrane components of the histidine transport operon of S. typhimurium.</title>
        <authorList>
            <person name="Higgins C.F."/>
            <person name="Haag P.D."/>
            <person name="Nikaido K."/>
            <person name="Ardeshir F."/>
            <person name="Garcia G."/>
            <person name="Ames G.F.-L."/>
        </authorList>
    </citation>
    <scope>NUCLEOTIDE SEQUENCE [GENOMIC DNA]</scope>
    <scope>FUNCTION</scope>
    <scope>SUBUNIT</scope>
</reference>
<reference key="2">
    <citation type="journal article" date="2001" name="Nature">
        <title>Complete genome sequence of Salmonella enterica serovar Typhimurium LT2.</title>
        <authorList>
            <person name="McClelland M."/>
            <person name="Sanderson K.E."/>
            <person name="Spieth J."/>
            <person name="Clifton S.W."/>
            <person name="Latreille P."/>
            <person name="Courtney L."/>
            <person name="Porwollik S."/>
            <person name="Ali J."/>
            <person name="Dante M."/>
            <person name="Du F."/>
            <person name="Hou S."/>
            <person name="Layman D."/>
            <person name="Leonard S."/>
            <person name="Nguyen C."/>
            <person name="Scott K."/>
            <person name="Holmes A."/>
            <person name="Grewal N."/>
            <person name="Mulvaney E."/>
            <person name="Ryan E."/>
            <person name="Sun H."/>
            <person name="Florea L."/>
            <person name="Miller W."/>
            <person name="Stoneking T."/>
            <person name="Nhan M."/>
            <person name="Waterston R."/>
            <person name="Wilson R.K."/>
        </authorList>
    </citation>
    <scope>NUCLEOTIDE SEQUENCE [LARGE SCALE GENOMIC DNA]</scope>
    <source>
        <strain>LT2 / SGSC1412 / ATCC 700720</strain>
    </source>
</reference>
<reference key="3">
    <citation type="journal article" date="1991" name="J. Biol. Chem.">
        <title>The membrane-bound proteins of periplasmic permeases form a complex. Identification of the histidine permease HisQMP complex.</title>
        <authorList>
            <person name="Kerppola R.E."/>
            <person name="Shyamala V.K."/>
            <person name="Klebba P."/>
            <person name="Ames G.F."/>
        </authorList>
    </citation>
    <scope>SUBUNIT</scope>
    <scope>SUBCELLULAR LOCATION</scope>
</reference>
<reference key="4">
    <citation type="journal article" date="1992" name="J. Biol. Chem.">
        <title>Topology of the hydrophobic membrane-bound components of the histidine periplasmic permease. Comparison with other members of the family.</title>
        <authorList>
            <person name="Kerppola R.E."/>
            <person name="Ames G.F.-L."/>
        </authorList>
    </citation>
    <scope>TOPOLOGY</scope>
    <scope>SUBCELLULAR LOCATION</scope>
</reference>
<reference key="5">
    <citation type="journal article" date="1998" name="Proc. Natl. Acad. Sci. U.S.A.">
        <title>In vitro disassembly and reassembly of an ABC transporter, the histidine permease.</title>
        <authorList>
            <person name="Liu P.Q."/>
            <person name="Ames G.F."/>
        </authorList>
    </citation>
    <scope>FUNCTION</scope>
    <scope>SUBUNIT</scope>
</reference>
<reference key="6">
    <citation type="journal article" date="2014" name="Biochim. Biophys. Acta">
        <title>Conformational changes of the bacterial type I ATP-binding cassette importer HisQMP2 at distinct steps of the catalytic cycle.</title>
        <authorList>
            <person name="Heuveling J."/>
            <person name="Frochaux V."/>
            <person name="Ziomkowska J."/>
            <person name="Wawrzinek R."/>
            <person name="Wessig P."/>
            <person name="Herrmann A."/>
            <person name="Schneider E."/>
        </authorList>
    </citation>
    <scope>FUNCTION</scope>
    <scope>SUBUNIT</scope>
</reference>
<evidence type="ECO:0000255" key="1"/>
<evidence type="ECO:0000255" key="2">
    <source>
        <dbReference type="PROSITE-ProRule" id="PRU00441"/>
    </source>
</evidence>
<evidence type="ECO:0000269" key="3">
    <source>
    </source>
</evidence>
<evidence type="ECO:0000269" key="4">
    <source>
    </source>
</evidence>
<evidence type="ECO:0000269" key="5">
    <source>
    </source>
</evidence>
<evidence type="ECO:0000269" key="6">
    <source>
    </source>
</evidence>
<evidence type="ECO:0000269" key="7">
    <source>
    </source>
</evidence>
<evidence type="ECO:0000303" key="8">
    <source>
    </source>
</evidence>
<evidence type="ECO:0000305" key="9"/>
<comment type="function">
    <text evidence="5 6 7 9">Part of the ABC transporter complex HisPMQJ involved in histidine transport (PubMed:7050725, PubMed:9520394). Is also part of the ABC transporter complex HisPMQ-ArgT involved in lysine/arginine/ornithine transport (PubMed:24021237). Probably responsible for the translocation of the substrate across the membrane (Probable). Required to relay the ATPase-inducing signal from the solute-binding protein to HisP (PubMed:9520394).</text>
</comment>
<comment type="subunit">
    <text evidence="4 5 6 7">The HisPMQJ complex is composed of two ATP-binding proteins (HisP), two transmembrane proteins (HisM and HisQ) and a solute-binding protein (HisJ) (PubMed:2033074, PubMed:7050725, PubMed:9520394). The HisPMQ-ArgT complex is composed of two ATP-binding proteins (HisP), two transmembrane proteins (HisM and HisQ) and a solute-binding protein (ArgT) (PubMed:24021237).</text>
</comment>
<comment type="subcellular location">
    <subcellularLocation>
        <location evidence="3 4">Cell inner membrane</location>
        <topology evidence="3 4">Multi-pass membrane protein</topology>
    </subcellularLocation>
</comment>
<comment type="similarity">
    <text evidence="9">Belongs to the binding-protein-dependent transport system permease family. HisMQ subfamily.</text>
</comment>
<dbReference type="EMBL" id="V01373">
    <property type="protein sequence ID" value="CAA24661.1"/>
    <property type="molecule type" value="Genomic_DNA"/>
</dbReference>
<dbReference type="EMBL" id="J01805">
    <property type="protein sequence ID" value="AAA75580.1"/>
    <property type="molecule type" value="Genomic_DNA"/>
</dbReference>
<dbReference type="EMBL" id="AE006468">
    <property type="protein sequence ID" value="AAL21253.1"/>
    <property type="molecule type" value="Genomic_DNA"/>
</dbReference>
<dbReference type="PIR" id="A03409">
    <property type="entry name" value="MMEBMT"/>
</dbReference>
<dbReference type="RefSeq" id="NP_461294.1">
    <property type="nucleotide sequence ID" value="NC_003197.2"/>
</dbReference>
<dbReference type="RefSeq" id="WP_000569771.1">
    <property type="nucleotide sequence ID" value="NC_003197.2"/>
</dbReference>
<dbReference type="SMR" id="P0A2I7"/>
<dbReference type="STRING" id="99287.STM2352"/>
<dbReference type="TCDB" id="3.A.1.3.1">
    <property type="family name" value="the atp-binding cassette (abc) superfamily"/>
</dbReference>
<dbReference type="PaxDb" id="99287-STM2352"/>
<dbReference type="GeneID" id="1253874"/>
<dbReference type="KEGG" id="stm:STM2352"/>
<dbReference type="PATRIC" id="fig|99287.12.peg.2489"/>
<dbReference type="HOGENOM" id="CLU_019602_1_4_6"/>
<dbReference type="OMA" id="QLVPMWA"/>
<dbReference type="PhylomeDB" id="P0A2I7"/>
<dbReference type="BioCyc" id="SENT99287:STM2352-MONOMER"/>
<dbReference type="Proteomes" id="UP000001014">
    <property type="component" value="Chromosome"/>
</dbReference>
<dbReference type="GO" id="GO:0043190">
    <property type="term" value="C:ATP-binding cassette (ABC) transporter complex"/>
    <property type="evidence" value="ECO:0007669"/>
    <property type="project" value="InterPro"/>
</dbReference>
<dbReference type="GO" id="GO:0005886">
    <property type="term" value="C:plasma membrane"/>
    <property type="evidence" value="ECO:0000318"/>
    <property type="project" value="GO_Central"/>
</dbReference>
<dbReference type="GO" id="GO:0022857">
    <property type="term" value="F:transmembrane transporter activity"/>
    <property type="evidence" value="ECO:0007669"/>
    <property type="project" value="InterPro"/>
</dbReference>
<dbReference type="GO" id="GO:0006865">
    <property type="term" value="P:amino acid transport"/>
    <property type="evidence" value="ECO:0000318"/>
    <property type="project" value="GO_Central"/>
</dbReference>
<dbReference type="CDD" id="cd06261">
    <property type="entry name" value="TM_PBP2"/>
    <property type="match status" value="1"/>
</dbReference>
<dbReference type="FunFam" id="1.10.3720.10:FF:000012">
    <property type="entry name" value="Histidine ABC transporter permease HisM"/>
    <property type="match status" value="1"/>
</dbReference>
<dbReference type="Gene3D" id="1.10.3720.10">
    <property type="entry name" value="MetI-like"/>
    <property type="match status" value="1"/>
</dbReference>
<dbReference type="InterPro" id="IPR051322">
    <property type="entry name" value="AA_ABC_Transporter_Permease"/>
</dbReference>
<dbReference type="InterPro" id="IPR010065">
    <property type="entry name" value="AA_ABC_transptr_permease_3TM"/>
</dbReference>
<dbReference type="InterPro" id="IPR000515">
    <property type="entry name" value="MetI-like"/>
</dbReference>
<dbReference type="InterPro" id="IPR035906">
    <property type="entry name" value="MetI-like_sf"/>
</dbReference>
<dbReference type="NCBIfam" id="TIGR01726">
    <property type="entry name" value="HEQRo_perm_3TM"/>
    <property type="match status" value="1"/>
</dbReference>
<dbReference type="NCBIfam" id="NF011651">
    <property type="entry name" value="PRK15069.1"/>
    <property type="match status" value="1"/>
</dbReference>
<dbReference type="PANTHER" id="PTHR30450">
    <property type="entry name" value="ABC TRANSPORTER PERMEASE"/>
    <property type="match status" value="1"/>
</dbReference>
<dbReference type="PANTHER" id="PTHR30450:SF5">
    <property type="entry name" value="HISTIDINE TRANSPORT SYSTEM PERMEASE PROTEIN HISM"/>
    <property type="match status" value="1"/>
</dbReference>
<dbReference type="Pfam" id="PF00528">
    <property type="entry name" value="BPD_transp_1"/>
    <property type="match status" value="1"/>
</dbReference>
<dbReference type="SUPFAM" id="SSF161098">
    <property type="entry name" value="MetI-like"/>
    <property type="match status" value="1"/>
</dbReference>
<dbReference type="PROSITE" id="PS50928">
    <property type="entry name" value="ABC_TM1"/>
    <property type="match status" value="1"/>
</dbReference>
<proteinExistence type="evidence at protein level"/>
<organism>
    <name type="scientific">Salmonella typhimurium (strain LT2 / SGSC1412 / ATCC 700720)</name>
    <dbReference type="NCBI Taxonomy" id="99287"/>
    <lineage>
        <taxon>Bacteria</taxon>
        <taxon>Pseudomonadati</taxon>
        <taxon>Pseudomonadota</taxon>
        <taxon>Gammaproteobacteria</taxon>
        <taxon>Enterobacterales</taxon>
        <taxon>Enterobacteriaceae</taxon>
        <taxon>Salmonella</taxon>
    </lineage>
</organism>
<name>HISM_SALTY</name>
<sequence>MIEIIQEYWKSLLWTDGYRFTGVAITLWLLISSVVMGGLLAVILAVGRVSSNKFIRFPIWLFTYIFRGTPLYVQLLVFYSGMYTLEIVKGTDLLNAFFRSGLNCTVLALTLNTCAYTTEIFAGAIRSVPHGEIEAARAYGFSSFKMYRCIILPSALRIALPAYSNEVILMLHSTALAFTATVPDLLKIARDINSATYQPFTAFGIAAVLYLLISYVLISLFRRAERRWLQHVSSK</sequence>
<keyword id="KW-0029">Amino-acid transport</keyword>
<keyword id="KW-0997">Cell inner membrane</keyword>
<keyword id="KW-1003">Cell membrane</keyword>
<keyword id="KW-0472">Membrane</keyword>
<keyword id="KW-1185">Reference proteome</keyword>
<keyword id="KW-0812">Transmembrane</keyword>
<keyword id="KW-1133">Transmembrane helix</keyword>
<keyword id="KW-0813">Transport</keyword>
<protein>
    <recommendedName>
        <fullName evidence="9">Histidine/lysine/arginine/ornithine transport system permease protein HisM</fullName>
    </recommendedName>
</protein>
<accession>P0A2I7</accession>
<accession>P02912</accession>